<protein>
    <recommendedName>
        <fullName evidence="1">N-acetyldiaminopimelate deacetylase</fullName>
        <ecNumber evidence="1">3.5.1.47</ecNumber>
    </recommendedName>
</protein>
<reference key="1">
    <citation type="journal article" date="2008" name="Chem. Biol. Interact.">
        <title>Extending the Bacillus cereus group genomics to putative food-borne pathogens of different toxicity.</title>
        <authorList>
            <person name="Lapidus A."/>
            <person name="Goltsman E."/>
            <person name="Auger S."/>
            <person name="Galleron N."/>
            <person name="Segurens B."/>
            <person name="Dossat C."/>
            <person name="Land M.L."/>
            <person name="Broussolle V."/>
            <person name="Brillard J."/>
            <person name="Guinebretiere M.-H."/>
            <person name="Sanchis V."/>
            <person name="Nguen-the C."/>
            <person name="Lereclus D."/>
            <person name="Richardson P."/>
            <person name="Wincker P."/>
            <person name="Weissenbach J."/>
            <person name="Ehrlich S.D."/>
            <person name="Sorokin A."/>
        </authorList>
    </citation>
    <scope>NUCLEOTIDE SEQUENCE [LARGE SCALE GENOMIC DNA]</scope>
    <source>
        <strain>DSM 22905 / CIP 110041 / 391-98 / NVH 391-98</strain>
    </source>
</reference>
<keyword id="KW-0028">Amino-acid biosynthesis</keyword>
<keyword id="KW-0220">Diaminopimelate biosynthesis</keyword>
<keyword id="KW-0378">Hydrolase</keyword>
<keyword id="KW-0457">Lysine biosynthesis</keyword>
<name>DAPEL_BACCN</name>
<feature type="chain" id="PRO_0000376745" description="N-acetyldiaminopimelate deacetylase">
    <location>
        <begin position="1"/>
        <end position="376"/>
    </location>
</feature>
<feature type="active site" evidence="1">
    <location>
        <position position="69"/>
    </location>
</feature>
<feature type="active site" description="Proton acceptor" evidence="1">
    <location>
        <position position="128"/>
    </location>
</feature>
<proteinExistence type="inferred from homology"/>
<dbReference type="EC" id="3.5.1.47" evidence="1"/>
<dbReference type="EMBL" id="CP000764">
    <property type="protein sequence ID" value="ABS22916.1"/>
    <property type="molecule type" value="Genomic_DNA"/>
</dbReference>
<dbReference type="RefSeq" id="WP_012095139.1">
    <property type="nucleotide sequence ID" value="NC_009674.1"/>
</dbReference>
<dbReference type="SMR" id="A7GS08"/>
<dbReference type="STRING" id="315749.Bcer98_2682"/>
<dbReference type="MEROPS" id="M20.A27"/>
<dbReference type="GeneID" id="33897937"/>
<dbReference type="KEGG" id="bcy:Bcer98_2682"/>
<dbReference type="eggNOG" id="COG1473">
    <property type="taxonomic scope" value="Bacteria"/>
</dbReference>
<dbReference type="HOGENOM" id="CLU_023257_0_1_9"/>
<dbReference type="OrthoDB" id="9776731at2"/>
<dbReference type="UniPathway" id="UPA00034">
    <property type="reaction ID" value="UER00024"/>
</dbReference>
<dbReference type="Proteomes" id="UP000002300">
    <property type="component" value="Chromosome"/>
</dbReference>
<dbReference type="GO" id="GO:0050118">
    <property type="term" value="F:N-acetyldiaminopimelate deacetylase activity"/>
    <property type="evidence" value="ECO:0007669"/>
    <property type="project" value="UniProtKB-UniRule"/>
</dbReference>
<dbReference type="GO" id="GO:0019877">
    <property type="term" value="P:diaminopimelate biosynthetic process"/>
    <property type="evidence" value="ECO:0007669"/>
    <property type="project" value="UniProtKB-UniRule"/>
</dbReference>
<dbReference type="GO" id="GO:0009089">
    <property type="term" value="P:lysine biosynthetic process via diaminopimelate"/>
    <property type="evidence" value="ECO:0007669"/>
    <property type="project" value="UniProtKB-UniRule"/>
</dbReference>
<dbReference type="CDD" id="cd05670">
    <property type="entry name" value="M20_Acy1_YkuR-like"/>
    <property type="match status" value="1"/>
</dbReference>
<dbReference type="FunFam" id="3.30.70.360:FF:000001">
    <property type="entry name" value="N-acetyldiaminopimelate deacetylase"/>
    <property type="match status" value="1"/>
</dbReference>
<dbReference type="Gene3D" id="3.30.70.360">
    <property type="match status" value="1"/>
</dbReference>
<dbReference type="Gene3D" id="3.40.630.10">
    <property type="entry name" value="Zn peptidases"/>
    <property type="match status" value="1"/>
</dbReference>
<dbReference type="HAMAP" id="MF_01692">
    <property type="entry name" value="DapEL"/>
    <property type="match status" value="1"/>
</dbReference>
<dbReference type="InterPro" id="IPR023905">
    <property type="entry name" value="AcetylDAP_deacetylase"/>
</dbReference>
<dbReference type="InterPro" id="IPR017439">
    <property type="entry name" value="Amidohydrolase"/>
</dbReference>
<dbReference type="InterPro" id="IPR036264">
    <property type="entry name" value="Bact_exopeptidase_dim_dom"/>
</dbReference>
<dbReference type="InterPro" id="IPR002933">
    <property type="entry name" value="Peptidase_M20"/>
</dbReference>
<dbReference type="InterPro" id="IPR011650">
    <property type="entry name" value="Peptidase_M20_dimer"/>
</dbReference>
<dbReference type="NCBIfam" id="TIGR01891">
    <property type="entry name" value="amidohydrolases"/>
    <property type="match status" value="1"/>
</dbReference>
<dbReference type="PANTHER" id="PTHR11014:SF98">
    <property type="entry name" value="N-ACETYLDIAMINOPIMELATE DEACETYLASE"/>
    <property type="match status" value="1"/>
</dbReference>
<dbReference type="PANTHER" id="PTHR11014">
    <property type="entry name" value="PEPTIDASE M20 FAMILY MEMBER"/>
    <property type="match status" value="1"/>
</dbReference>
<dbReference type="Pfam" id="PF07687">
    <property type="entry name" value="M20_dimer"/>
    <property type="match status" value="1"/>
</dbReference>
<dbReference type="Pfam" id="PF01546">
    <property type="entry name" value="Peptidase_M20"/>
    <property type="match status" value="1"/>
</dbReference>
<dbReference type="PIRSF" id="PIRSF005962">
    <property type="entry name" value="Pept_M20D_amidohydro"/>
    <property type="match status" value="1"/>
</dbReference>
<dbReference type="SUPFAM" id="SSF55031">
    <property type="entry name" value="Bacterial exopeptidase dimerisation domain"/>
    <property type="match status" value="1"/>
</dbReference>
<dbReference type="SUPFAM" id="SSF53187">
    <property type="entry name" value="Zn-dependent exopeptidases"/>
    <property type="match status" value="1"/>
</dbReference>
<accession>A7GS08</accession>
<gene>
    <name type="ordered locus">Bcer98_2682</name>
</gene>
<sequence>MTISKFVQIRRDLHQIPELGFQEWKTQQYILNYIETLPNEHIEVKTWKTGVIVKVKGKNPVKTIGYRADMDGLPIVEETGYEFASTHEGMMHACGHDFHTTIGLGLLTATVNDRIDDDLVFLFQPAEEGPGGALPMLESEELKEWKPNMILGLHIAPEYPVGTIATKEGLLFANTSELYIDLKGKGGHAAYPHMANDMIVAASHLVTQLQSVISRNVNPLDSAVITIGKITGGTVQNIIAEKSRLEGTIRTLSVESMKRVKDRIEAIVAGIEAAFQCEAVIDYGAMYHQVYNHEALTKEFMEFASKDTNMNVVTCKEAMTGEDFGYMLRDIPGFMFWLGVDSEYGLHHAKLKPNEAAIDRAIEFLNQYVKWKGNRR</sequence>
<organism>
    <name type="scientific">Bacillus cytotoxicus (strain DSM 22905 / CIP 110041 / 391-98 / NVH 391-98)</name>
    <dbReference type="NCBI Taxonomy" id="315749"/>
    <lineage>
        <taxon>Bacteria</taxon>
        <taxon>Bacillati</taxon>
        <taxon>Bacillota</taxon>
        <taxon>Bacilli</taxon>
        <taxon>Bacillales</taxon>
        <taxon>Bacillaceae</taxon>
        <taxon>Bacillus</taxon>
        <taxon>Bacillus cereus group</taxon>
    </lineage>
</organism>
<comment type="function">
    <text evidence="1">Catalyzes the conversion of N-acetyl-diaminopimelate to diaminopimelate and acetate.</text>
</comment>
<comment type="catalytic activity">
    <reaction evidence="1">
        <text>N-acetyl-(2S,6S)-2,6-diaminopimelate + H2O = (2S,6S)-2,6-diaminopimelate + acetate</text>
        <dbReference type="Rhea" id="RHEA:20405"/>
        <dbReference type="ChEBI" id="CHEBI:15377"/>
        <dbReference type="ChEBI" id="CHEBI:30089"/>
        <dbReference type="ChEBI" id="CHEBI:57609"/>
        <dbReference type="ChEBI" id="CHEBI:58767"/>
        <dbReference type="EC" id="3.5.1.47"/>
    </reaction>
</comment>
<comment type="pathway">
    <text evidence="1">Amino-acid biosynthesis; L-lysine biosynthesis via DAP pathway; LL-2,6-diaminopimelate from (S)-tetrahydrodipicolinate (acetylase route): step 3/3.</text>
</comment>
<comment type="similarity">
    <text evidence="1">Belongs to the peptidase M20A family. N-acetyldiaminopimelate deacetylase subfamily.</text>
</comment>
<evidence type="ECO:0000255" key="1">
    <source>
        <dbReference type="HAMAP-Rule" id="MF_01692"/>
    </source>
</evidence>